<sequence length="286" mass="31254">MRYIRLCIISLLATLPLAVHASPQPLEQIKLSESQLSGRVGMIEMDLASGRTLTAWRADERFPMMSTFKVVLCGAVLARVDAGDEQLERKIHYRQQDLVDYSPVSEKHLADGMTVGELCAAAITMSDNSAANLLLATVGGPAGLTAFLRQIGDNVTRLDRWETELNEALPGDARDTTTPASMAATLRKLLTSQRLSARSQRQLLQWMVDDRVAGPLIRSVLPAGWFIADKTGASERGARGIVALLGPNNKAERIVVIYLRDTPASMAERNQQIAGIGAALIEHWQR</sequence>
<feature type="signal peptide" evidence="1">
    <location>
        <begin position="1"/>
        <end position="21"/>
    </location>
</feature>
<feature type="chain" id="PRO_0000041958" description="Beta-lactamase SHV-2">
    <location>
        <begin position="22"/>
        <end position="286"/>
    </location>
</feature>
<feature type="active site" description="Acyl-ester intermediate" evidence="2">
    <location>
        <position position="66"/>
    </location>
</feature>
<feature type="active site" description="Proton acceptor" evidence="1">
    <location>
        <position position="164"/>
    </location>
</feature>
<feature type="binding site" evidence="1">
    <location>
        <begin position="230"/>
        <end position="232"/>
    </location>
    <ligand>
        <name>substrate</name>
    </ligand>
</feature>
<feature type="disulfide bond" evidence="1">
    <location>
        <begin position="73"/>
        <end position="119"/>
    </location>
</feature>
<organism>
    <name type="scientific">Klebsiella pneumoniae subsp. ozaenae</name>
    <dbReference type="NCBI Taxonomy" id="574"/>
    <lineage>
        <taxon>Bacteria</taxon>
        <taxon>Pseudomonadati</taxon>
        <taxon>Pseudomonadota</taxon>
        <taxon>Gammaproteobacteria</taxon>
        <taxon>Enterobacterales</taxon>
        <taxon>Enterobacteriaceae</taxon>
        <taxon>Klebsiella/Raoultella group</taxon>
        <taxon>Klebsiella</taxon>
        <taxon>Klebsiella pneumoniae complex</taxon>
    </lineage>
</organism>
<comment type="function">
    <text>This enzyme hydrolyzes cefotaxime, ceftazidime and other broad spectrum cephalosporins.</text>
</comment>
<comment type="catalytic activity">
    <reaction evidence="2">
        <text>a beta-lactam + H2O = a substituted beta-amino acid</text>
        <dbReference type="Rhea" id="RHEA:20401"/>
        <dbReference type="ChEBI" id="CHEBI:15377"/>
        <dbReference type="ChEBI" id="CHEBI:35627"/>
        <dbReference type="ChEBI" id="CHEBI:140347"/>
        <dbReference type="EC" id="3.5.2.6"/>
    </reaction>
</comment>
<comment type="miscellaneous">
    <text evidence="4">The class A beta-lactamase family has a specific amino-acid numbering system, sometimes called Ambler or ABL numbering and often misspelt as Amber. A multiple sequence alignment was used to derive a consensus sequence and then the consensus was numbered taking into account insertions and deletions. This allows use of identical numbers, e.g. for active site residues, despite differences in protein length. UniProt always uses natural numbering of residues, hence there appear to be differences in numbering between this entry and some papers.</text>
</comment>
<comment type="similarity">
    <text evidence="3">Belongs to the class-A beta-lactamase family.</text>
</comment>
<keyword id="KW-0046">Antibiotic resistance</keyword>
<keyword id="KW-1015">Disulfide bond</keyword>
<keyword id="KW-0378">Hydrolase</keyword>
<keyword id="KW-0614">Plasmid</keyword>
<keyword id="KW-0732">Signal</keyword>
<proteinExistence type="inferred from homology"/>
<gene>
    <name type="primary">bla</name>
    <name type="synonym">shv2</name>
</gene>
<evidence type="ECO:0000250" key="1"/>
<evidence type="ECO:0000255" key="2">
    <source>
        <dbReference type="PROSITE-ProRule" id="PRU10101"/>
    </source>
</evidence>
<evidence type="ECO:0000305" key="3"/>
<evidence type="ECO:0000305" key="4">
    <source>
    </source>
</evidence>
<dbReference type="EC" id="3.5.2.6"/>
<dbReference type="EMBL" id="X53433">
    <property type="protein sequence ID" value="CAA37524.1"/>
    <property type="molecule type" value="Genomic_DNA"/>
</dbReference>
<dbReference type="EMBL" id="M95179">
    <property type="protein sequence ID" value="AAA25526.1"/>
    <property type="molecule type" value="Genomic_DNA"/>
</dbReference>
<dbReference type="PIR" id="A44998">
    <property type="entry name" value="A44998"/>
</dbReference>
<dbReference type="SMR" id="P0A9Z9"/>
<dbReference type="CARD" id="ARO:3001060">
    <property type="molecule name" value="SHV-2"/>
    <property type="mechanism identifier" value="ARO:0001004"/>
    <property type="mechanism name" value="antibiotic inactivation"/>
</dbReference>
<dbReference type="SABIO-RK" id="P0A9Z9"/>
<dbReference type="GO" id="GO:0008800">
    <property type="term" value="F:beta-lactamase activity"/>
    <property type="evidence" value="ECO:0007669"/>
    <property type="project" value="UniProtKB-EC"/>
</dbReference>
<dbReference type="GO" id="GO:0030655">
    <property type="term" value="P:beta-lactam antibiotic catabolic process"/>
    <property type="evidence" value="ECO:0007669"/>
    <property type="project" value="InterPro"/>
</dbReference>
<dbReference type="GO" id="GO:0046677">
    <property type="term" value="P:response to antibiotic"/>
    <property type="evidence" value="ECO:0007669"/>
    <property type="project" value="UniProtKB-KW"/>
</dbReference>
<dbReference type="Gene3D" id="3.40.710.10">
    <property type="entry name" value="DD-peptidase/beta-lactamase superfamily"/>
    <property type="match status" value="1"/>
</dbReference>
<dbReference type="InterPro" id="IPR012338">
    <property type="entry name" value="Beta-lactam/transpept-like"/>
</dbReference>
<dbReference type="InterPro" id="IPR045155">
    <property type="entry name" value="Beta-lactam_cat"/>
</dbReference>
<dbReference type="InterPro" id="IPR000871">
    <property type="entry name" value="Beta-lactam_class-A"/>
</dbReference>
<dbReference type="InterPro" id="IPR023650">
    <property type="entry name" value="Beta-lactam_class-A_AS"/>
</dbReference>
<dbReference type="NCBIfam" id="NF033103">
    <property type="entry name" value="bla_class_A"/>
    <property type="match status" value="1"/>
</dbReference>
<dbReference type="NCBIfam" id="NF000285">
    <property type="entry name" value="SHV"/>
    <property type="match status" value="1"/>
</dbReference>
<dbReference type="NCBIfam" id="NF012143">
    <property type="entry name" value="SHV_LEN_OKP"/>
    <property type="match status" value="1"/>
</dbReference>
<dbReference type="PANTHER" id="PTHR35333">
    <property type="entry name" value="BETA-LACTAMASE"/>
    <property type="match status" value="1"/>
</dbReference>
<dbReference type="PANTHER" id="PTHR35333:SF3">
    <property type="entry name" value="BETA-LACTAMASE-TYPE TRANSPEPTIDASE FOLD CONTAINING PROTEIN"/>
    <property type="match status" value="1"/>
</dbReference>
<dbReference type="Pfam" id="PF13354">
    <property type="entry name" value="Beta-lactamase2"/>
    <property type="match status" value="1"/>
</dbReference>
<dbReference type="PRINTS" id="PR00118">
    <property type="entry name" value="BLACTAMASEA"/>
</dbReference>
<dbReference type="SUPFAM" id="SSF56601">
    <property type="entry name" value="beta-lactamase/transpeptidase-like"/>
    <property type="match status" value="1"/>
</dbReference>
<dbReference type="PROSITE" id="PS00146">
    <property type="entry name" value="BETA_LACTAMASE_A"/>
    <property type="match status" value="1"/>
</dbReference>
<reference key="1">
    <citation type="journal article" date="1990" name="Nucleic Acids Res.">
        <title>Nucleotide sequence of the gene encoding the SHV-2 beta-lactamase (blaSHV-2) of Klebsiella ozaenae.</title>
        <authorList>
            <person name="Podbielski A."/>
            <person name="Melzer B."/>
        </authorList>
    </citation>
    <scope>NUCLEOTIDE SEQUENCE [GENOMIC DNA]</scope>
    <source>
        <strain>2180</strain>
    </source>
</reference>
<reference key="2">
    <citation type="journal article" date="1990" name="Antimicrob. Agents Chemother.">
        <title>Nucleotide sequence and phylogeny of SHV-2 beta-lactamase.</title>
        <authorList>
            <person name="Huletsky A."/>
            <person name="Couture F."/>
            <person name="Levesque R.C."/>
        </authorList>
    </citation>
    <scope>NUCLEOTIDE SEQUENCE [GENOMIC DNA]</scope>
    <source>
        <plasmid>pBP60-1</plasmid>
    </source>
</reference>
<reference key="3">
    <citation type="journal article" date="1991" name="Biochem. J.">
        <title>A standard numbering scheme for the class A beta-lactamases.</title>
        <authorList>
            <person name="Ambler R.P."/>
            <person name="Coulson A.F."/>
            <person name="Frere J.M."/>
            <person name="Ghuysen J.M."/>
            <person name="Joris B."/>
            <person name="Forsman M."/>
            <person name="Levesque R.C."/>
            <person name="Tiraby G."/>
            <person name="Waley S.G."/>
        </authorList>
    </citation>
    <scope>AMINO ACID NUMBERING SCHEME</scope>
</reference>
<name>BLA2_KLEPO</name>
<geneLocation type="plasmid">
    <name>pBP60-1</name>
</geneLocation>
<protein>
    <recommendedName>
        <fullName>Beta-lactamase SHV-2</fullName>
        <ecNumber>3.5.2.6</ecNumber>
    </recommendedName>
    <alternativeName>
        <fullName>SHV-2A</fullName>
    </alternativeName>
</protein>
<accession>P0A9Z9</accession>
<accession>P14558</accession>